<accession>A6ZPP1</accession>
<reference key="1">
    <citation type="journal article" date="2007" name="Proc. Natl. Acad. Sci. U.S.A.">
        <title>Genome sequencing and comparative analysis of Saccharomyces cerevisiae strain YJM789.</title>
        <authorList>
            <person name="Wei W."/>
            <person name="McCusker J.H."/>
            <person name="Hyman R.W."/>
            <person name="Jones T."/>
            <person name="Ning Y."/>
            <person name="Cao Z."/>
            <person name="Gu Z."/>
            <person name="Bruno D."/>
            <person name="Miranda M."/>
            <person name="Nguyen M."/>
            <person name="Wilhelmy J."/>
            <person name="Komp C."/>
            <person name="Tamse R."/>
            <person name="Wang X."/>
            <person name="Jia P."/>
            <person name="Luedi P."/>
            <person name="Oefner P.J."/>
            <person name="David L."/>
            <person name="Dietrich F.S."/>
            <person name="Li Y."/>
            <person name="Davis R.W."/>
            <person name="Steinmetz L.M."/>
        </authorList>
    </citation>
    <scope>NUCLEOTIDE SEQUENCE [LARGE SCALE GENOMIC DNA]</scope>
    <source>
        <strain>YJM789</strain>
    </source>
</reference>
<comment type="function">
    <text evidence="1">With IRS4, acts as a positive regulator of INP51 activity and phosphatidylinositol 4,5-bisphosphate turnover. Negatively regulates signaling through the cell integrity pathway, including the MAP kinase SLT2 (By similarity).</text>
</comment>
<comment type="subunit">
    <text evidence="1">Interacts with INP51.</text>
</comment>
<comment type="similarity">
    <text evidence="3">Belongs to the IRS4 family.</text>
</comment>
<feature type="chain" id="PRO_0000308768" description="Protein TAX4">
    <location>
        <begin position="1"/>
        <end position="604"/>
    </location>
</feature>
<feature type="domain" description="EH">
    <location>
        <begin position="469"/>
        <end position="559"/>
    </location>
</feature>
<feature type="region of interest" description="Disordered" evidence="2">
    <location>
        <begin position="38"/>
        <end position="77"/>
    </location>
</feature>
<feature type="region of interest" description="Disordered" evidence="2">
    <location>
        <begin position="133"/>
        <end position="249"/>
    </location>
</feature>
<feature type="region of interest" description="Disordered" evidence="2">
    <location>
        <begin position="267"/>
        <end position="300"/>
    </location>
</feature>
<feature type="region of interest" description="Disordered" evidence="2">
    <location>
        <begin position="338"/>
        <end position="380"/>
    </location>
</feature>
<feature type="region of interest" description="Disordered" evidence="2">
    <location>
        <begin position="394"/>
        <end position="428"/>
    </location>
</feature>
<feature type="compositionally biased region" description="Polar residues" evidence="2">
    <location>
        <begin position="176"/>
        <end position="185"/>
    </location>
</feature>
<feature type="compositionally biased region" description="Low complexity" evidence="2">
    <location>
        <begin position="186"/>
        <end position="203"/>
    </location>
</feature>
<feature type="compositionally biased region" description="Low complexity" evidence="2">
    <location>
        <begin position="224"/>
        <end position="240"/>
    </location>
</feature>
<feature type="compositionally biased region" description="Basic residues" evidence="2">
    <location>
        <begin position="276"/>
        <end position="290"/>
    </location>
</feature>
<feature type="compositionally biased region" description="Basic residues" evidence="2">
    <location>
        <begin position="366"/>
        <end position="379"/>
    </location>
</feature>
<feature type="compositionally biased region" description="Basic residues" evidence="2">
    <location>
        <begin position="396"/>
        <end position="421"/>
    </location>
</feature>
<protein>
    <recommendedName>
        <fullName>Protein TAX4</fullName>
    </recommendedName>
</protein>
<gene>
    <name type="primary">TAX4</name>
    <name type="ORF">SCY_2851</name>
</gene>
<dbReference type="EMBL" id="AAFW02000038">
    <property type="protein sequence ID" value="EDN63494.1"/>
    <property type="molecule type" value="Genomic_DNA"/>
</dbReference>
<dbReference type="SMR" id="A6ZPP1"/>
<dbReference type="HOGENOM" id="CLU_452143_0_0_1"/>
<dbReference type="Proteomes" id="UP000007060">
    <property type="component" value="Unassembled WGS sequence"/>
</dbReference>
<dbReference type="GO" id="GO:0006629">
    <property type="term" value="P:lipid metabolic process"/>
    <property type="evidence" value="ECO:0007669"/>
    <property type="project" value="UniProtKB-KW"/>
</dbReference>
<dbReference type="CDD" id="cd00052">
    <property type="entry name" value="EH"/>
    <property type="match status" value="1"/>
</dbReference>
<dbReference type="FunFam" id="1.10.238.10:FF:000326">
    <property type="entry name" value="IRS4p EH domain-containing protein"/>
    <property type="match status" value="1"/>
</dbReference>
<dbReference type="Gene3D" id="1.10.238.10">
    <property type="entry name" value="EF-hand"/>
    <property type="match status" value="1"/>
</dbReference>
<dbReference type="InterPro" id="IPR011992">
    <property type="entry name" value="EF-hand-dom_pair"/>
</dbReference>
<dbReference type="InterPro" id="IPR000261">
    <property type="entry name" value="EH_dom"/>
</dbReference>
<dbReference type="Pfam" id="PF12763">
    <property type="entry name" value="EH"/>
    <property type="match status" value="1"/>
</dbReference>
<dbReference type="SMART" id="SM00027">
    <property type="entry name" value="EH"/>
    <property type="match status" value="1"/>
</dbReference>
<dbReference type="SUPFAM" id="SSF47473">
    <property type="entry name" value="EF-hand"/>
    <property type="match status" value="1"/>
</dbReference>
<sequence length="604" mass="68710">MHFPKKKHSGNLSVVELPKEALQDSLTAAQITFKRYAHPNGNAGSAERPRHLKVESAPVVKSEPSLPRMRQPEPRSINHQYSRETLPGHSEAFSVPTTPLQTIHYDVRNKASNSPSSIAAAEAAAYLAHTNSFSNRSSGVGSRDPVMDTETKPPRAPSALKNELQLNRMRIPPPSYDNNVRSRSISPQVSYSTSLSSSCSISSDGEETSYREKSTDEAFPPEPSMSSYSLASKASAKASLTDPSQRQQESDYTAMNKLNGGNIIYKGTLPDLIPRSQRKTSKPRFKHKLLRSPEQQQENLSRVYSDQTQNGRAIINTQQNVKLKTTMRRGKYAITDNDETFPYDRKSVSSDSDTDEDSNVMEIKDKKKKSRRSKIKKGLKTTAAVVGSSTSVLPFPHHHHHHHQLHNPNSHHLHTHHHTSSHKFNEDKPWKSHRDLGFITEQERKRYESMWVSNRYSYLRLLPWWPSLANEDDESHLQPLNLPQDGLMLNLVVKDIWYRSNLPRDLLVQIYNMVDTRKDGTLDRKSFIVGMWLVDQCLYGRKLTNELDQRVWNSVDGYVLGTINVKPATSDHYHNANNPLDKPSKLSVRQELKNIKRDLRNVRI</sequence>
<keyword id="KW-0443">Lipid metabolism</keyword>
<name>TAX4_YEAS7</name>
<proteinExistence type="inferred from homology"/>
<organism>
    <name type="scientific">Saccharomyces cerevisiae (strain YJM789)</name>
    <name type="common">Baker's yeast</name>
    <dbReference type="NCBI Taxonomy" id="307796"/>
    <lineage>
        <taxon>Eukaryota</taxon>
        <taxon>Fungi</taxon>
        <taxon>Dikarya</taxon>
        <taxon>Ascomycota</taxon>
        <taxon>Saccharomycotina</taxon>
        <taxon>Saccharomycetes</taxon>
        <taxon>Saccharomycetales</taxon>
        <taxon>Saccharomycetaceae</taxon>
        <taxon>Saccharomyces</taxon>
    </lineage>
</organism>
<evidence type="ECO:0000250" key="1"/>
<evidence type="ECO:0000256" key="2">
    <source>
        <dbReference type="SAM" id="MobiDB-lite"/>
    </source>
</evidence>
<evidence type="ECO:0000305" key="3"/>